<accession>Q0WEF0</accession>
<accession>Q74TJ7</accession>
<accession>Q8D0L6</accession>
<keyword id="KW-0067">ATP-binding</keyword>
<keyword id="KW-0119">Carbohydrate metabolism</keyword>
<keyword id="KW-0418">Kinase</keyword>
<keyword id="KW-0547">Nucleotide-binding</keyword>
<keyword id="KW-1185">Reference proteome</keyword>
<keyword id="KW-0808">Transferase</keyword>
<proteinExistence type="inferred from homology"/>
<protein>
    <recommendedName>
        <fullName evidence="1">Anhydro-N-acetylmuramic acid kinase</fullName>
        <ecNumber evidence="1">2.7.1.170</ecNumber>
    </recommendedName>
    <alternativeName>
        <fullName evidence="1">AnhMurNAc kinase</fullName>
    </alternativeName>
</protein>
<gene>
    <name evidence="1" type="primary">anmK</name>
    <name type="ordered locus">YPO2372</name>
    <name type="ordered locus">y1963</name>
    <name type="ordered locus">YP_2158</name>
</gene>
<evidence type="ECO:0000255" key="1">
    <source>
        <dbReference type="HAMAP-Rule" id="MF_01270"/>
    </source>
</evidence>
<evidence type="ECO:0000305" key="2"/>
<feature type="chain" id="PRO_0000250091" description="Anhydro-N-acetylmuramic acid kinase">
    <location>
        <begin position="1"/>
        <end position="370"/>
    </location>
</feature>
<feature type="binding site" evidence="1">
    <location>
        <begin position="12"/>
        <end position="19"/>
    </location>
    <ligand>
        <name>ATP</name>
        <dbReference type="ChEBI" id="CHEBI:30616"/>
    </ligand>
</feature>
<dbReference type="EC" id="2.7.1.170" evidence="1"/>
<dbReference type="EMBL" id="AL590842">
    <property type="protein sequence ID" value="CAL21000.1"/>
    <property type="molecule type" value="Genomic_DNA"/>
</dbReference>
<dbReference type="EMBL" id="AE009952">
    <property type="protein sequence ID" value="AAM85529.1"/>
    <property type="status" value="ALT_INIT"/>
    <property type="molecule type" value="Genomic_DNA"/>
</dbReference>
<dbReference type="EMBL" id="AE017042">
    <property type="protein sequence ID" value="AAS62366.1"/>
    <property type="status" value="ALT_INIT"/>
    <property type="molecule type" value="Genomic_DNA"/>
</dbReference>
<dbReference type="PIR" id="AE0289">
    <property type="entry name" value="AE0289"/>
</dbReference>
<dbReference type="RefSeq" id="WP_002218322.1">
    <property type="nucleotide sequence ID" value="NZ_WUCL01000047.1"/>
</dbReference>
<dbReference type="RefSeq" id="YP_002347338.1">
    <property type="nucleotide sequence ID" value="NC_003143.1"/>
</dbReference>
<dbReference type="SMR" id="Q0WEF0"/>
<dbReference type="STRING" id="214092.YPO2372"/>
<dbReference type="PaxDb" id="214092-YPO2372"/>
<dbReference type="EnsemblBacteria" id="AAS62366">
    <property type="protein sequence ID" value="AAS62366"/>
    <property type="gene ID" value="YP_2158"/>
</dbReference>
<dbReference type="GeneID" id="57976303"/>
<dbReference type="KEGG" id="ype:YPO2372"/>
<dbReference type="KEGG" id="ypk:y1963"/>
<dbReference type="KEGG" id="ypm:YP_2158"/>
<dbReference type="PATRIC" id="fig|214092.21.peg.2779"/>
<dbReference type="eggNOG" id="COG2377">
    <property type="taxonomic scope" value="Bacteria"/>
</dbReference>
<dbReference type="HOGENOM" id="CLU_038782_0_0_6"/>
<dbReference type="OrthoDB" id="9763949at2"/>
<dbReference type="UniPathway" id="UPA00343"/>
<dbReference type="UniPathway" id="UPA00544"/>
<dbReference type="Proteomes" id="UP000000815">
    <property type="component" value="Chromosome"/>
</dbReference>
<dbReference type="Proteomes" id="UP000001019">
    <property type="component" value="Chromosome"/>
</dbReference>
<dbReference type="Proteomes" id="UP000002490">
    <property type="component" value="Chromosome"/>
</dbReference>
<dbReference type="GO" id="GO:0005524">
    <property type="term" value="F:ATP binding"/>
    <property type="evidence" value="ECO:0007669"/>
    <property type="project" value="UniProtKB-UniRule"/>
</dbReference>
<dbReference type="GO" id="GO:0016301">
    <property type="term" value="F:kinase activity"/>
    <property type="evidence" value="ECO:0000318"/>
    <property type="project" value="GO_Central"/>
</dbReference>
<dbReference type="GO" id="GO:0016773">
    <property type="term" value="F:phosphotransferase activity, alcohol group as acceptor"/>
    <property type="evidence" value="ECO:0007669"/>
    <property type="project" value="UniProtKB-UniRule"/>
</dbReference>
<dbReference type="GO" id="GO:0097175">
    <property type="term" value="P:1,6-anhydro-N-acetyl-beta-muramic acid catabolic process"/>
    <property type="evidence" value="ECO:0007669"/>
    <property type="project" value="UniProtKB-UniRule"/>
</dbReference>
<dbReference type="GO" id="GO:0006040">
    <property type="term" value="P:amino sugar metabolic process"/>
    <property type="evidence" value="ECO:0007669"/>
    <property type="project" value="InterPro"/>
</dbReference>
<dbReference type="GO" id="GO:0009254">
    <property type="term" value="P:peptidoglycan turnover"/>
    <property type="evidence" value="ECO:0007669"/>
    <property type="project" value="UniProtKB-UniRule"/>
</dbReference>
<dbReference type="CDD" id="cd24050">
    <property type="entry name" value="ASKHA_NBD_ANMK"/>
    <property type="match status" value="1"/>
</dbReference>
<dbReference type="Gene3D" id="3.30.420.40">
    <property type="match status" value="2"/>
</dbReference>
<dbReference type="HAMAP" id="MF_01270">
    <property type="entry name" value="AnhMurNAc_kinase"/>
    <property type="match status" value="1"/>
</dbReference>
<dbReference type="InterPro" id="IPR005338">
    <property type="entry name" value="Anhydro_N_Ac-Mur_kinase"/>
</dbReference>
<dbReference type="InterPro" id="IPR043129">
    <property type="entry name" value="ATPase_NBD"/>
</dbReference>
<dbReference type="NCBIfam" id="NF007138">
    <property type="entry name" value="PRK09585.1-1"/>
    <property type="match status" value="1"/>
</dbReference>
<dbReference type="NCBIfam" id="NF007139">
    <property type="entry name" value="PRK09585.1-3"/>
    <property type="match status" value="1"/>
</dbReference>
<dbReference type="NCBIfam" id="NF007148">
    <property type="entry name" value="PRK09585.3-2"/>
    <property type="match status" value="1"/>
</dbReference>
<dbReference type="PANTHER" id="PTHR30605">
    <property type="entry name" value="ANHYDRO-N-ACETYLMURAMIC ACID KINASE"/>
    <property type="match status" value="1"/>
</dbReference>
<dbReference type="PANTHER" id="PTHR30605:SF0">
    <property type="entry name" value="ANHYDRO-N-ACETYLMURAMIC ACID KINASE"/>
    <property type="match status" value="1"/>
</dbReference>
<dbReference type="Pfam" id="PF03702">
    <property type="entry name" value="AnmK"/>
    <property type="match status" value="1"/>
</dbReference>
<dbReference type="SUPFAM" id="SSF53067">
    <property type="entry name" value="Actin-like ATPase domain"/>
    <property type="match status" value="1"/>
</dbReference>
<comment type="function">
    <text evidence="1">Catalyzes the specific phosphorylation of 1,6-anhydro-N-acetylmuramic acid (anhMurNAc) with the simultaneous cleavage of the 1,6-anhydro ring, generating MurNAc-6-P. Is required for the utilization of anhMurNAc either imported from the medium or derived from its own cell wall murein, and thus plays a role in cell wall recycling.</text>
</comment>
<comment type="catalytic activity">
    <reaction evidence="1">
        <text>1,6-anhydro-N-acetyl-beta-muramate + ATP + H2O = N-acetyl-D-muramate 6-phosphate + ADP + H(+)</text>
        <dbReference type="Rhea" id="RHEA:24952"/>
        <dbReference type="ChEBI" id="CHEBI:15377"/>
        <dbReference type="ChEBI" id="CHEBI:15378"/>
        <dbReference type="ChEBI" id="CHEBI:30616"/>
        <dbReference type="ChEBI" id="CHEBI:58690"/>
        <dbReference type="ChEBI" id="CHEBI:58722"/>
        <dbReference type="ChEBI" id="CHEBI:456216"/>
        <dbReference type="EC" id="2.7.1.170"/>
    </reaction>
</comment>
<comment type="pathway">
    <text evidence="1">Amino-sugar metabolism; 1,6-anhydro-N-acetylmuramate degradation.</text>
</comment>
<comment type="pathway">
    <text evidence="1">Cell wall biogenesis; peptidoglycan recycling.</text>
</comment>
<comment type="similarity">
    <text evidence="1">Belongs to the anhydro-N-acetylmuramic acid kinase family.</text>
</comment>
<comment type="sequence caution" evidence="2">
    <conflict type="erroneous initiation">
        <sequence resource="EMBL-CDS" id="AAM85529"/>
    </conflict>
</comment>
<comment type="sequence caution" evidence="2">
    <conflict type="erroneous initiation">
        <sequence resource="EMBL-CDS" id="AAS62366"/>
    </conflict>
</comment>
<sequence length="370" mass="39492">MKSGRFIGVMSGTSLDGVDVVLAAIDERMVAQQASYTHPIPLQLKKDILGMCQGQSTTLSAVGKLDAQLGILFAEAVLALLAKEGLSAQDITAIGCHGQTVWHEPLGEPAFTMQLGDNNRIAAMTQIATVGDFRRRDMAYGGQGAPLVPAFHHALLAHATEKRMVLNIGGIANLSVLLPDSPIRGFDTGPGNMLMDAWIWRNCSLPYDKDACWALSGHVNQPLLEQMFNDPYFRLPAPKSTGREYFNAAWLDKQLARIPGVTAEDIQATLAELTAVSITEQVRLAGGCDRLLVCGGGARNPLVMARISALLSGTEVCTTDDAGIRGDDMEALAFAWLAFRTLSGKPGNLPSVTGASRETILGAVHPVSSW</sequence>
<organism>
    <name type="scientific">Yersinia pestis</name>
    <dbReference type="NCBI Taxonomy" id="632"/>
    <lineage>
        <taxon>Bacteria</taxon>
        <taxon>Pseudomonadati</taxon>
        <taxon>Pseudomonadota</taxon>
        <taxon>Gammaproteobacteria</taxon>
        <taxon>Enterobacterales</taxon>
        <taxon>Yersiniaceae</taxon>
        <taxon>Yersinia</taxon>
    </lineage>
</organism>
<name>ANMK_YERPE</name>
<reference key="1">
    <citation type="journal article" date="2001" name="Nature">
        <title>Genome sequence of Yersinia pestis, the causative agent of plague.</title>
        <authorList>
            <person name="Parkhill J."/>
            <person name="Wren B.W."/>
            <person name="Thomson N.R."/>
            <person name="Titball R.W."/>
            <person name="Holden M.T.G."/>
            <person name="Prentice M.B."/>
            <person name="Sebaihia M."/>
            <person name="James K.D."/>
            <person name="Churcher C.M."/>
            <person name="Mungall K.L."/>
            <person name="Baker S."/>
            <person name="Basham D."/>
            <person name="Bentley S.D."/>
            <person name="Brooks K."/>
            <person name="Cerdeno-Tarraga A.-M."/>
            <person name="Chillingworth T."/>
            <person name="Cronin A."/>
            <person name="Davies R.M."/>
            <person name="Davis P."/>
            <person name="Dougan G."/>
            <person name="Feltwell T."/>
            <person name="Hamlin N."/>
            <person name="Holroyd S."/>
            <person name="Jagels K."/>
            <person name="Karlyshev A.V."/>
            <person name="Leather S."/>
            <person name="Moule S."/>
            <person name="Oyston P.C.F."/>
            <person name="Quail M.A."/>
            <person name="Rutherford K.M."/>
            <person name="Simmonds M."/>
            <person name="Skelton J."/>
            <person name="Stevens K."/>
            <person name="Whitehead S."/>
            <person name="Barrell B.G."/>
        </authorList>
    </citation>
    <scope>NUCLEOTIDE SEQUENCE [LARGE SCALE GENOMIC DNA]</scope>
    <source>
        <strain>CO-92 / Biovar Orientalis</strain>
    </source>
</reference>
<reference key="2">
    <citation type="journal article" date="2002" name="J. Bacteriol.">
        <title>Genome sequence of Yersinia pestis KIM.</title>
        <authorList>
            <person name="Deng W."/>
            <person name="Burland V."/>
            <person name="Plunkett G. III"/>
            <person name="Boutin A."/>
            <person name="Mayhew G.F."/>
            <person name="Liss P."/>
            <person name="Perna N.T."/>
            <person name="Rose D.J."/>
            <person name="Mau B."/>
            <person name="Zhou S."/>
            <person name="Schwartz D.C."/>
            <person name="Fetherston J.D."/>
            <person name="Lindler L.E."/>
            <person name="Brubaker R.R."/>
            <person name="Plano G.V."/>
            <person name="Straley S.C."/>
            <person name="McDonough K.A."/>
            <person name="Nilles M.L."/>
            <person name="Matson J.S."/>
            <person name="Blattner F.R."/>
            <person name="Perry R.D."/>
        </authorList>
    </citation>
    <scope>NUCLEOTIDE SEQUENCE [LARGE SCALE GENOMIC DNA]</scope>
    <source>
        <strain>KIM10+ / Biovar Mediaevalis</strain>
    </source>
</reference>
<reference key="3">
    <citation type="journal article" date="2004" name="DNA Res.">
        <title>Complete genome sequence of Yersinia pestis strain 91001, an isolate avirulent to humans.</title>
        <authorList>
            <person name="Song Y."/>
            <person name="Tong Z."/>
            <person name="Wang J."/>
            <person name="Wang L."/>
            <person name="Guo Z."/>
            <person name="Han Y."/>
            <person name="Zhang J."/>
            <person name="Pei D."/>
            <person name="Zhou D."/>
            <person name="Qin H."/>
            <person name="Pang X."/>
            <person name="Han Y."/>
            <person name="Zhai J."/>
            <person name="Li M."/>
            <person name="Cui B."/>
            <person name="Qi Z."/>
            <person name="Jin L."/>
            <person name="Dai R."/>
            <person name="Chen F."/>
            <person name="Li S."/>
            <person name="Ye C."/>
            <person name="Du Z."/>
            <person name="Lin W."/>
            <person name="Wang J."/>
            <person name="Yu J."/>
            <person name="Yang H."/>
            <person name="Wang J."/>
            <person name="Huang P."/>
            <person name="Yang R."/>
        </authorList>
    </citation>
    <scope>NUCLEOTIDE SEQUENCE [LARGE SCALE GENOMIC DNA]</scope>
    <source>
        <strain>91001 / Biovar Mediaevalis</strain>
    </source>
</reference>